<comment type="function">
    <text evidence="1">Required for anaerobic carnitine reduction. May bring reductant to CaiA.</text>
</comment>
<comment type="pathway">
    <text evidence="1">Amine and polyamine metabolism; carnitine metabolism.</text>
</comment>
<comment type="subunit">
    <text evidence="1">Heterodimer of FixA and FixB.</text>
</comment>
<comment type="similarity">
    <text evidence="1">Belongs to the ETF beta-subunit/FixA family.</text>
</comment>
<sequence>MKIITCYKCVPDEQDIAINNADGTLDFSKADSKISQYDLNAIEAACQLKQQLGDAQVVAMSVGGKALTNAKGRKDVLSRGPDELIVVIDDQFEQALPQHTATALAAAAQKSGFDLLICGDGSSDLYAQQVGLLVGEALNIPAINGVSKILSLTDSTLTVERELEDEVETLSIPLPAVIAVSTDINTPQIPSMKAILGAAKKPVQVWSPADIGLNSVPAYSAQQVAAPKQRERQRVVIEGDGEEQIAAFVENLRKII</sequence>
<organism>
    <name type="scientific">Salmonella typhimurium (strain LT2 / SGSC1412 / ATCC 700720)</name>
    <dbReference type="NCBI Taxonomy" id="99287"/>
    <lineage>
        <taxon>Bacteria</taxon>
        <taxon>Pseudomonadati</taxon>
        <taxon>Pseudomonadota</taxon>
        <taxon>Gammaproteobacteria</taxon>
        <taxon>Enterobacterales</taxon>
        <taxon>Enterobacteriaceae</taxon>
        <taxon>Salmonella</taxon>
    </lineage>
</organism>
<evidence type="ECO:0000255" key="1">
    <source>
        <dbReference type="HAMAP-Rule" id="MF_01055"/>
    </source>
</evidence>
<reference key="1">
    <citation type="journal article" date="2001" name="Nature">
        <title>Complete genome sequence of Salmonella enterica serovar Typhimurium LT2.</title>
        <authorList>
            <person name="McClelland M."/>
            <person name="Sanderson K.E."/>
            <person name="Spieth J."/>
            <person name="Clifton S.W."/>
            <person name="Latreille P."/>
            <person name="Courtney L."/>
            <person name="Porwollik S."/>
            <person name="Ali J."/>
            <person name="Dante M."/>
            <person name="Du F."/>
            <person name="Hou S."/>
            <person name="Layman D."/>
            <person name="Leonard S."/>
            <person name="Nguyen C."/>
            <person name="Scott K."/>
            <person name="Holmes A."/>
            <person name="Grewal N."/>
            <person name="Mulvaney E."/>
            <person name="Ryan E."/>
            <person name="Sun H."/>
            <person name="Florea L."/>
            <person name="Miller W."/>
            <person name="Stoneking T."/>
            <person name="Nhan M."/>
            <person name="Waterston R."/>
            <person name="Wilson R.K."/>
        </authorList>
    </citation>
    <scope>NUCLEOTIDE SEQUENCE [LARGE SCALE GENOMIC DNA]</scope>
    <source>
        <strain>LT2 / SGSC1412 / ATCC 700720</strain>
    </source>
</reference>
<dbReference type="EMBL" id="AE006468">
    <property type="protein sequence ID" value="AAL19039.1"/>
    <property type="molecule type" value="Genomic_DNA"/>
</dbReference>
<dbReference type="RefSeq" id="NP_459080.1">
    <property type="nucleotide sequence ID" value="NC_003197.2"/>
</dbReference>
<dbReference type="RefSeq" id="WP_000692185.1">
    <property type="nucleotide sequence ID" value="NC_003197.2"/>
</dbReference>
<dbReference type="SMR" id="Q8ZRX0"/>
<dbReference type="STRING" id="99287.STM0075"/>
<dbReference type="PaxDb" id="99287-STM0075"/>
<dbReference type="GeneID" id="1251593"/>
<dbReference type="KEGG" id="stm:STM0075"/>
<dbReference type="PATRIC" id="fig|99287.12.peg.78"/>
<dbReference type="HOGENOM" id="CLU_060196_2_2_6"/>
<dbReference type="OMA" id="YLNITEW"/>
<dbReference type="PhylomeDB" id="Q8ZRX0"/>
<dbReference type="BioCyc" id="SENT99287:STM0075-MONOMER"/>
<dbReference type="UniPathway" id="UPA00117"/>
<dbReference type="Proteomes" id="UP000001014">
    <property type="component" value="Chromosome"/>
</dbReference>
<dbReference type="GO" id="GO:0009055">
    <property type="term" value="F:electron transfer activity"/>
    <property type="evidence" value="ECO:0000318"/>
    <property type="project" value="GO_Central"/>
</dbReference>
<dbReference type="GO" id="GO:0009437">
    <property type="term" value="P:carnitine metabolic process"/>
    <property type="evidence" value="ECO:0007669"/>
    <property type="project" value="UniProtKB-UniRule"/>
</dbReference>
<dbReference type="CDD" id="cd01714">
    <property type="entry name" value="ETF_beta"/>
    <property type="match status" value="1"/>
</dbReference>
<dbReference type="FunFam" id="3.40.50.620:FF:000072">
    <property type="entry name" value="Protein FixA homolog"/>
    <property type="match status" value="1"/>
</dbReference>
<dbReference type="Gene3D" id="3.40.50.620">
    <property type="entry name" value="HUPs"/>
    <property type="match status" value="1"/>
</dbReference>
<dbReference type="HAMAP" id="MF_01055">
    <property type="entry name" value="FixA"/>
    <property type="match status" value="1"/>
</dbReference>
<dbReference type="InterPro" id="IPR000049">
    <property type="entry name" value="ET-Flavoprotein_bsu_CS"/>
</dbReference>
<dbReference type="InterPro" id="IPR014730">
    <property type="entry name" value="ETF_a/b_N"/>
</dbReference>
<dbReference type="InterPro" id="IPR012255">
    <property type="entry name" value="ETF_b"/>
</dbReference>
<dbReference type="InterPro" id="IPR033948">
    <property type="entry name" value="ETF_beta_N"/>
</dbReference>
<dbReference type="InterPro" id="IPR023463">
    <property type="entry name" value="FixA"/>
</dbReference>
<dbReference type="InterPro" id="IPR014729">
    <property type="entry name" value="Rossmann-like_a/b/a_fold"/>
</dbReference>
<dbReference type="NCBIfam" id="NF002888">
    <property type="entry name" value="PRK03359.1"/>
    <property type="match status" value="1"/>
</dbReference>
<dbReference type="PANTHER" id="PTHR21294">
    <property type="entry name" value="ELECTRON TRANSFER FLAVOPROTEIN BETA-SUBUNIT"/>
    <property type="match status" value="1"/>
</dbReference>
<dbReference type="PANTHER" id="PTHR21294:SF17">
    <property type="entry name" value="PROTEIN FIXA"/>
    <property type="match status" value="1"/>
</dbReference>
<dbReference type="Pfam" id="PF01012">
    <property type="entry name" value="ETF"/>
    <property type="match status" value="1"/>
</dbReference>
<dbReference type="PIRSF" id="PIRSF000090">
    <property type="entry name" value="Beta-ETF"/>
    <property type="match status" value="1"/>
</dbReference>
<dbReference type="SMART" id="SM00893">
    <property type="entry name" value="ETF"/>
    <property type="match status" value="1"/>
</dbReference>
<dbReference type="SUPFAM" id="SSF52402">
    <property type="entry name" value="Adenine nucleotide alpha hydrolases-like"/>
    <property type="match status" value="1"/>
</dbReference>
<dbReference type="PROSITE" id="PS01065">
    <property type="entry name" value="ETF_BETA"/>
    <property type="match status" value="1"/>
</dbReference>
<accession>Q8ZRX0</accession>
<name>FIXA_SALTY</name>
<proteinExistence type="inferred from homology"/>
<keyword id="KW-0249">Electron transport</keyword>
<keyword id="KW-1185">Reference proteome</keyword>
<keyword id="KW-0813">Transport</keyword>
<gene>
    <name evidence="1" type="primary">fixA</name>
    <name type="ordered locus">STM0075</name>
</gene>
<feature type="chain" id="PRO_0000167897" description="Protein FixA">
    <location>
        <begin position="1"/>
        <end position="256"/>
    </location>
</feature>
<protein>
    <recommendedName>
        <fullName evidence="1">Protein FixA</fullName>
    </recommendedName>
</protein>